<feature type="chain" id="PRO_0000136984" description="Nucleoside diphosphate kinase">
    <location>
        <begin position="1"/>
        <end position="140"/>
    </location>
</feature>
<feature type="active site" description="Pros-phosphohistidine intermediate" evidence="1">
    <location>
        <position position="117"/>
    </location>
</feature>
<feature type="binding site" evidence="1">
    <location>
        <position position="11"/>
    </location>
    <ligand>
        <name>ATP</name>
        <dbReference type="ChEBI" id="CHEBI:30616"/>
    </ligand>
</feature>
<feature type="binding site" evidence="1">
    <location>
        <position position="59"/>
    </location>
    <ligand>
        <name>ATP</name>
        <dbReference type="ChEBI" id="CHEBI:30616"/>
    </ligand>
</feature>
<feature type="binding site" evidence="1">
    <location>
        <position position="87"/>
    </location>
    <ligand>
        <name>ATP</name>
        <dbReference type="ChEBI" id="CHEBI:30616"/>
    </ligand>
</feature>
<feature type="binding site" evidence="1">
    <location>
        <position position="93"/>
    </location>
    <ligand>
        <name>ATP</name>
        <dbReference type="ChEBI" id="CHEBI:30616"/>
    </ligand>
</feature>
<feature type="binding site" evidence="1">
    <location>
        <position position="104"/>
    </location>
    <ligand>
        <name>ATP</name>
        <dbReference type="ChEBI" id="CHEBI:30616"/>
    </ligand>
</feature>
<feature type="binding site" evidence="1">
    <location>
        <position position="114"/>
    </location>
    <ligand>
        <name>ATP</name>
        <dbReference type="ChEBI" id="CHEBI:30616"/>
    </ligand>
</feature>
<reference key="1">
    <citation type="journal article" date="2005" name="Nat. Genet.">
        <title>The complete genome sequence of Francisella tularensis, the causative agent of tularemia.</title>
        <authorList>
            <person name="Larsson P."/>
            <person name="Oyston P.C.F."/>
            <person name="Chain P."/>
            <person name="Chu M.C."/>
            <person name="Duffield M."/>
            <person name="Fuxelius H.-H."/>
            <person name="Garcia E."/>
            <person name="Haelltorp G."/>
            <person name="Johansson D."/>
            <person name="Isherwood K.E."/>
            <person name="Karp P.D."/>
            <person name="Larsson E."/>
            <person name="Liu Y."/>
            <person name="Michell S."/>
            <person name="Prior J."/>
            <person name="Prior R."/>
            <person name="Malfatti S."/>
            <person name="Sjoestedt A."/>
            <person name="Svensson K."/>
            <person name="Thompson N."/>
            <person name="Vergez L."/>
            <person name="Wagg J.K."/>
            <person name="Wren B.W."/>
            <person name="Lindler L.E."/>
            <person name="Andersson S.G.E."/>
            <person name="Forsman M."/>
            <person name="Titball R.W."/>
        </authorList>
    </citation>
    <scope>NUCLEOTIDE SEQUENCE [LARGE SCALE GENOMIC DNA]</scope>
    <source>
        <strain>SCHU S4 / Schu 4</strain>
    </source>
</reference>
<proteinExistence type="inferred from homology"/>
<comment type="function">
    <text evidence="1">Major role in the synthesis of nucleoside triphosphates other than ATP. The ATP gamma phosphate is transferred to the NDP beta phosphate via a ping-pong mechanism, using a phosphorylated active-site intermediate.</text>
</comment>
<comment type="catalytic activity">
    <reaction evidence="1">
        <text>a 2'-deoxyribonucleoside 5'-diphosphate + ATP = a 2'-deoxyribonucleoside 5'-triphosphate + ADP</text>
        <dbReference type="Rhea" id="RHEA:44640"/>
        <dbReference type="ChEBI" id="CHEBI:30616"/>
        <dbReference type="ChEBI" id="CHEBI:61560"/>
        <dbReference type="ChEBI" id="CHEBI:73316"/>
        <dbReference type="ChEBI" id="CHEBI:456216"/>
        <dbReference type="EC" id="2.7.4.6"/>
    </reaction>
</comment>
<comment type="catalytic activity">
    <reaction evidence="1">
        <text>a ribonucleoside 5'-diphosphate + ATP = a ribonucleoside 5'-triphosphate + ADP</text>
        <dbReference type="Rhea" id="RHEA:18113"/>
        <dbReference type="ChEBI" id="CHEBI:30616"/>
        <dbReference type="ChEBI" id="CHEBI:57930"/>
        <dbReference type="ChEBI" id="CHEBI:61557"/>
        <dbReference type="ChEBI" id="CHEBI:456216"/>
        <dbReference type="EC" id="2.7.4.6"/>
    </reaction>
</comment>
<comment type="cofactor">
    <cofactor evidence="1">
        <name>Mg(2+)</name>
        <dbReference type="ChEBI" id="CHEBI:18420"/>
    </cofactor>
</comment>
<comment type="subunit">
    <text evidence="1">Homotetramer.</text>
</comment>
<comment type="subcellular location">
    <subcellularLocation>
        <location evidence="1">Cytoplasm</location>
    </subcellularLocation>
</comment>
<comment type="similarity">
    <text evidence="1">Belongs to the NDK family.</text>
</comment>
<sequence length="140" mass="15527">MTKQRTLSIIKPDAVEKNVIGEIYSRFEKAGLRIIAAKMKHLSKAEAERFYAVHKDRPFFSALVEFMISGPVMIQVLEGENAIAKNRELMGATNPKEAKAGTIRADFADSIDANAVHGSDAEDTAAQEIRYFFSDTEIFG</sequence>
<evidence type="ECO:0000255" key="1">
    <source>
        <dbReference type="HAMAP-Rule" id="MF_00451"/>
    </source>
</evidence>
<gene>
    <name evidence="1" type="primary">ndk</name>
    <name type="ordered locus">FTT_0373c</name>
</gene>
<organism>
    <name type="scientific">Francisella tularensis subsp. tularensis (strain SCHU S4 / Schu 4)</name>
    <dbReference type="NCBI Taxonomy" id="177416"/>
    <lineage>
        <taxon>Bacteria</taxon>
        <taxon>Pseudomonadati</taxon>
        <taxon>Pseudomonadota</taxon>
        <taxon>Gammaproteobacteria</taxon>
        <taxon>Thiotrichales</taxon>
        <taxon>Francisellaceae</taxon>
        <taxon>Francisella</taxon>
    </lineage>
</organism>
<keyword id="KW-0067">ATP-binding</keyword>
<keyword id="KW-0963">Cytoplasm</keyword>
<keyword id="KW-0418">Kinase</keyword>
<keyword id="KW-0460">Magnesium</keyword>
<keyword id="KW-0479">Metal-binding</keyword>
<keyword id="KW-0546">Nucleotide metabolism</keyword>
<keyword id="KW-0547">Nucleotide-binding</keyword>
<keyword id="KW-0597">Phosphoprotein</keyword>
<keyword id="KW-1185">Reference proteome</keyword>
<keyword id="KW-0808">Transferase</keyword>
<dbReference type="EC" id="2.7.4.6" evidence="1"/>
<dbReference type="EMBL" id="AJ749949">
    <property type="protein sequence ID" value="CAG45006.1"/>
    <property type="molecule type" value="Genomic_DNA"/>
</dbReference>
<dbReference type="RefSeq" id="WP_003020029.1">
    <property type="nucleotide sequence ID" value="NZ_CP010290.1"/>
</dbReference>
<dbReference type="RefSeq" id="YP_169420.1">
    <property type="nucleotide sequence ID" value="NC_006570.2"/>
</dbReference>
<dbReference type="SMR" id="Q5NHS2"/>
<dbReference type="STRING" id="177416.FTT_0373c"/>
<dbReference type="DNASU" id="3191686"/>
<dbReference type="EnsemblBacteria" id="CAG45006">
    <property type="protein sequence ID" value="CAG45006"/>
    <property type="gene ID" value="FTT_0373c"/>
</dbReference>
<dbReference type="KEGG" id="ftu:FTT_0373c"/>
<dbReference type="eggNOG" id="COG0105">
    <property type="taxonomic scope" value="Bacteria"/>
</dbReference>
<dbReference type="OrthoDB" id="9801161at2"/>
<dbReference type="Proteomes" id="UP000001174">
    <property type="component" value="Chromosome"/>
</dbReference>
<dbReference type="GO" id="GO:0005737">
    <property type="term" value="C:cytoplasm"/>
    <property type="evidence" value="ECO:0007669"/>
    <property type="project" value="UniProtKB-SubCell"/>
</dbReference>
<dbReference type="GO" id="GO:0005524">
    <property type="term" value="F:ATP binding"/>
    <property type="evidence" value="ECO:0007669"/>
    <property type="project" value="UniProtKB-UniRule"/>
</dbReference>
<dbReference type="GO" id="GO:0046872">
    <property type="term" value="F:metal ion binding"/>
    <property type="evidence" value="ECO:0007669"/>
    <property type="project" value="UniProtKB-KW"/>
</dbReference>
<dbReference type="GO" id="GO:0004550">
    <property type="term" value="F:nucleoside diphosphate kinase activity"/>
    <property type="evidence" value="ECO:0007669"/>
    <property type="project" value="UniProtKB-UniRule"/>
</dbReference>
<dbReference type="GO" id="GO:0006241">
    <property type="term" value="P:CTP biosynthetic process"/>
    <property type="evidence" value="ECO:0007669"/>
    <property type="project" value="UniProtKB-UniRule"/>
</dbReference>
<dbReference type="GO" id="GO:0006183">
    <property type="term" value="P:GTP biosynthetic process"/>
    <property type="evidence" value="ECO:0007669"/>
    <property type="project" value="UniProtKB-UniRule"/>
</dbReference>
<dbReference type="GO" id="GO:0006228">
    <property type="term" value="P:UTP biosynthetic process"/>
    <property type="evidence" value="ECO:0007669"/>
    <property type="project" value="UniProtKB-UniRule"/>
</dbReference>
<dbReference type="CDD" id="cd04413">
    <property type="entry name" value="NDPk_I"/>
    <property type="match status" value="1"/>
</dbReference>
<dbReference type="FunFam" id="3.30.70.141:FF:000001">
    <property type="entry name" value="Nucleoside diphosphate kinase"/>
    <property type="match status" value="1"/>
</dbReference>
<dbReference type="Gene3D" id="3.30.70.141">
    <property type="entry name" value="Nucleoside diphosphate kinase-like domain"/>
    <property type="match status" value="1"/>
</dbReference>
<dbReference type="HAMAP" id="MF_00451">
    <property type="entry name" value="NDP_kinase"/>
    <property type="match status" value="1"/>
</dbReference>
<dbReference type="InterPro" id="IPR034907">
    <property type="entry name" value="NDK-like_dom"/>
</dbReference>
<dbReference type="InterPro" id="IPR036850">
    <property type="entry name" value="NDK-like_dom_sf"/>
</dbReference>
<dbReference type="InterPro" id="IPR001564">
    <property type="entry name" value="Nucleoside_diP_kinase"/>
</dbReference>
<dbReference type="InterPro" id="IPR023005">
    <property type="entry name" value="Nucleoside_diP_kinase_AS"/>
</dbReference>
<dbReference type="NCBIfam" id="NF001908">
    <property type="entry name" value="PRK00668.1"/>
    <property type="match status" value="1"/>
</dbReference>
<dbReference type="PANTHER" id="PTHR46161">
    <property type="entry name" value="NUCLEOSIDE DIPHOSPHATE KINASE"/>
    <property type="match status" value="1"/>
</dbReference>
<dbReference type="PANTHER" id="PTHR46161:SF3">
    <property type="entry name" value="NUCLEOSIDE DIPHOSPHATE KINASE DDB_G0292928-RELATED"/>
    <property type="match status" value="1"/>
</dbReference>
<dbReference type="Pfam" id="PF00334">
    <property type="entry name" value="NDK"/>
    <property type="match status" value="1"/>
</dbReference>
<dbReference type="PRINTS" id="PR01243">
    <property type="entry name" value="NUCDPKINASE"/>
</dbReference>
<dbReference type="SMART" id="SM00562">
    <property type="entry name" value="NDK"/>
    <property type="match status" value="1"/>
</dbReference>
<dbReference type="SUPFAM" id="SSF54919">
    <property type="entry name" value="Nucleoside diphosphate kinase, NDK"/>
    <property type="match status" value="1"/>
</dbReference>
<dbReference type="PROSITE" id="PS00469">
    <property type="entry name" value="NDPK"/>
    <property type="match status" value="1"/>
</dbReference>
<dbReference type="PROSITE" id="PS51374">
    <property type="entry name" value="NDPK_LIKE"/>
    <property type="match status" value="1"/>
</dbReference>
<protein>
    <recommendedName>
        <fullName evidence="1">Nucleoside diphosphate kinase</fullName>
        <shortName evidence="1">NDK</shortName>
        <shortName evidence="1">NDP kinase</shortName>
        <ecNumber evidence="1">2.7.4.6</ecNumber>
    </recommendedName>
    <alternativeName>
        <fullName evidence="1">Nucleoside-2-P kinase</fullName>
    </alternativeName>
</protein>
<name>NDK_FRATT</name>
<accession>Q5NHS2</accession>